<reference key="1">
    <citation type="journal article" date="2004" name="J. Bacteriol.">
        <title>Comparative genomics of two Leptospira interrogans serovars reveals novel insights into physiology and pathogenesis.</title>
        <authorList>
            <person name="Nascimento A.L.T.O."/>
            <person name="Ko A.I."/>
            <person name="Martins E.A.L."/>
            <person name="Monteiro-Vitorello C.B."/>
            <person name="Ho P.L."/>
            <person name="Haake D.A."/>
            <person name="Verjovski-Almeida S."/>
            <person name="Hartskeerl R.A."/>
            <person name="Marques M.V."/>
            <person name="Oliveira M.C."/>
            <person name="Menck C.F.M."/>
            <person name="Leite L.C.C."/>
            <person name="Carrer H."/>
            <person name="Coutinho L.L."/>
            <person name="Degrave W.M."/>
            <person name="Dellagostin O.A."/>
            <person name="El-Dorry H."/>
            <person name="Ferro E.S."/>
            <person name="Ferro M.I.T."/>
            <person name="Furlan L.R."/>
            <person name="Gamberini M."/>
            <person name="Giglioti E.A."/>
            <person name="Goes-Neto A."/>
            <person name="Goldman G.H."/>
            <person name="Goldman M.H.S."/>
            <person name="Harakava R."/>
            <person name="Jeronimo S.M.B."/>
            <person name="Junqueira-de-Azevedo I.L.M."/>
            <person name="Kimura E.T."/>
            <person name="Kuramae E.E."/>
            <person name="Lemos E.G.M."/>
            <person name="Lemos M.V.F."/>
            <person name="Marino C.L."/>
            <person name="Nunes L.R."/>
            <person name="de Oliveira R.C."/>
            <person name="Pereira G.G."/>
            <person name="Reis M.S."/>
            <person name="Schriefer A."/>
            <person name="Siqueira W.J."/>
            <person name="Sommer P."/>
            <person name="Tsai S.M."/>
            <person name="Simpson A.J.G."/>
            <person name="Ferro J.A."/>
            <person name="Camargo L.E.A."/>
            <person name="Kitajima J.P."/>
            <person name="Setubal J.C."/>
            <person name="Van Sluys M.A."/>
        </authorList>
    </citation>
    <scope>NUCLEOTIDE SEQUENCE [LARGE SCALE GENOMIC DNA]</scope>
    <source>
        <strain>Fiocruz L1-130</strain>
    </source>
</reference>
<keyword id="KW-0067">ATP-binding</keyword>
<keyword id="KW-0963">Cytoplasm</keyword>
<keyword id="KW-0227">DNA damage</keyword>
<keyword id="KW-0234">DNA repair</keyword>
<keyword id="KW-0235">DNA replication</keyword>
<keyword id="KW-0238">DNA-binding</keyword>
<keyword id="KW-0547">Nucleotide-binding</keyword>
<keyword id="KW-0742">SOS response</keyword>
<dbReference type="EMBL" id="AE016823">
    <property type="protein sequence ID" value="AAS68640.1"/>
    <property type="molecule type" value="Genomic_DNA"/>
</dbReference>
<dbReference type="RefSeq" id="WP_000478836.1">
    <property type="nucleotide sequence ID" value="NC_005823.1"/>
</dbReference>
<dbReference type="SMR" id="Q72WD4"/>
<dbReference type="GeneID" id="61143358"/>
<dbReference type="KEGG" id="lic:LIC_10003"/>
<dbReference type="HOGENOM" id="CLU_040267_0_1_12"/>
<dbReference type="Proteomes" id="UP000007037">
    <property type="component" value="Chromosome I"/>
</dbReference>
<dbReference type="GO" id="GO:0005737">
    <property type="term" value="C:cytoplasm"/>
    <property type="evidence" value="ECO:0007669"/>
    <property type="project" value="UniProtKB-SubCell"/>
</dbReference>
<dbReference type="GO" id="GO:0005524">
    <property type="term" value="F:ATP binding"/>
    <property type="evidence" value="ECO:0007669"/>
    <property type="project" value="UniProtKB-UniRule"/>
</dbReference>
<dbReference type="GO" id="GO:0003697">
    <property type="term" value="F:single-stranded DNA binding"/>
    <property type="evidence" value="ECO:0007669"/>
    <property type="project" value="UniProtKB-UniRule"/>
</dbReference>
<dbReference type="GO" id="GO:0006260">
    <property type="term" value="P:DNA replication"/>
    <property type="evidence" value="ECO:0007669"/>
    <property type="project" value="UniProtKB-UniRule"/>
</dbReference>
<dbReference type="GO" id="GO:0000731">
    <property type="term" value="P:DNA synthesis involved in DNA repair"/>
    <property type="evidence" value="ECO:0007669"/>
    <property type="project" value="TreeGrafter"/>
</dbReference>
<dbReference type="GO" id="GO:0006302">
    <property type="term" value="P:double-strand break repair"/>
    <property type="evidence" value="ECO:0007669"/>
    <property type="project" value="TreeGrafter"/>
</dbReference>
<dbReference type="GO" id="GO:0009432">
    <property type="term" value="P:SOS response"/>
    <property type="evidence" value="ECO:0007669"/>
    <property type="project" value="UniProtKB-UniRule"/>
</dbReference>
<dbReference type="Gene3D" id="3.40.50.300">
    <property type="entry name" value="P-loop containing nucleotide triphosphate hydrolases"/>
    <property type="match status" value="1"/>
</dbReference>
<dbReference type="Gene3D" id="1.20.1050.90">
    <property type="entry name" value="RecF/RecN/SMC, N-terminal domain"/>
    <property type="match status" value="1"/>
</dbReference>
<dbReference type="HAMAP" id="MF_00365">
    <property type="entry name" value="RecF"/>
    <property type="match status" value="1"/>
</dbReference>
<dbReference type="InterPro" id="IPR001238">
    <property type="entry name" value="DNA-binding_RecF"/>
</dbReference>
<dbReference type="InterPro" id="IPR018078">
    <property type="entry name" value="DNA-binding_RecF_CS"/>
</dbReference>
<dbReference type="InterPro" id="IPR027417">
    <property type="entry name" value="P-loop_NTPase"/>
</dbReference>
<dbReference type="InterPro" id="IPR003395">
    <property type="entry name" value="RecF/RecN/SMC_N"/>
</dbReference>
<dbReference type="InterPro" id="IPR042174">
    <property type="entry name" value="RecF_2"/>
</dbReference>
<dbReference type="NCBIfam" id="TIGR00611">
    <property type="entry name" value="recf"/>
    <property type="match status" value="1"/>
</dbReference>
<dbReference type="PANTHER" id="PTHR32182">
    <property type="entry name" value="DNA REPLICATION AND REPAIR PROTEIN RECF"/>
    <property type="match status" value="1"/>
</dbReference>
<dbReference type="PANTHER" id="PTHR32182:SF0">
    <property type="entry name" value="DNA REPLICATION AND REPAIR PROTEIN RECF"/>
    <property type="match status" value="1"/>
</dbReference>
<dbReference type="Pfam" id="PF02463">
    <property type="entry name" value="SMC_N"/>
    <property type="match status" value="1"/>
</dbReference>
<dbReference type="SUPFAM" id="SSF52540">
    <property type="entry name" value="P-loop containing nucleoside triphosphate hydrolases"/>
    <property type="match status" value="1"/>
</dbReference>
<dbReference type="PROSITE" id="PS00617">
    <property type="entry name" value="RECF_1"/>
    <property type="match status" value="1"/>
</dbReference>
<dbReference type="PROSITE" id="PS00618">
    <property type="entry name" value="RECF_2"/>
    <property type="match status" value="1"/>
</dbReference>
<gene>
    <name evidence="1" type="primary">recF</name>
    <name type="ordered locus">LIC_10003</name>
</gene>
<comment type="function">
    <text evidence="1">The RecF protein is involved in DNA metabolism; it is required for DNA replication and normal SOS inducibility. RecF binds preferentially to single-stranded, linear DNA. It also seems to bind ATP.</text>
</comment>
<comment type="subcellular location">
    <subcellularLocation>
        <location evidence="1">Cytoplasm</location>
    </subcellularLocation>
</comment>
<comment type="similarity">
    <text evidence="1">Belongs to the RecF family.</text>
</comment>
<proteinExistence type="inferred from homology"/>
<evidence type="ECO:0000255" key="1">
    <source>
        <dbReference type="HAMAP-Rule" id="MF_00365"/>
    </source>
</evidence>
<protein>
    <recommendedName>
        <fullName evidence="1">DNA replication and repair protein RecF</fullName>
    </recommendedName>
</protein>
<organism>
    <name type="scientific">Leptospira interrogans serogroup Icterohaemorrhagiae serovar copenhageni (strain Fiocruz L1-130)</name>
    <dbReference type="NCBI Taxonomy" id="267671"/>
    <lineage>
        <taxon>Bacteria</taxon>
        <taxon>Pseudomonadati</taxon>
        <taxon>Spirochaetota</taxon>
        <taxon>Spirochaetia</taxon>
        <taxon>Leptospirales</taxon>
        <taxon>Leptospiraceae</taxon>
        <taxon>Leptospira</taxon>
    </lineage>
</organism>
<sequence length="365" mass="42429">MFLKHLTIQNFRNHEELSLDFDSRLIFFVGDNGEGKTNLLEAICILSWLKSFRESEDSNLIRWGSENYFLRGKIKNNLKESVLEIGFTSKPSVKRKLKFNQEEIKKRTDLIGKFITVLLTPMDLKIIEGGPAERRKFIDAFISSFDPFYLEFLLEYNKILKHRNALLKSGNLDISHLSIWDKKIVEKGIFILNKRREVVLELNSFYRVNLDKLSGGKDGLELIYKPNVKDQDEFLEKLNRNLSRDLRLGYTSVGIHRDDLFIGTDQRDITEFGSQGQKRSTVIALKAATFNYYKDILNTIPVLLIDDVIRELDVKRREYFVDLVVTAGQAFFTTTDLEGIQDYVGKLKDQKQIFLIRQGKVEPIK</sequence>
<name>RECF_LEPIC</name>
<feature type="chain" id="PRO_0000196426" description="DNA replication and repair protein RecF">
    <location>
        <begin position="1"/>
        <end position="365"/>
    </location>
</feature>
<feature type="binding site" evidence="1">
    <location>
        <begin position="30"/>
        <end position="37"/>
    </location>
    <ligand>
        <name>ATP</name>
        <dbReference type="ChEBI" id="CHEBI:30616"/>
    </ligand>
</feature>
<accession>Q72WD4</accession>